<proteinExistence type="inferred from homology"/>
<accession>A3D001</accession>
<gene>
    <name evidence="1" type="primary">rapA</name>
    <name type="ordered locus">Sbal_0535</name>
</gene>
<protein>
    <recommendedName>
        <fullName evidence="1">RNA polymerase-associated protein RapA</fullName>
        <ecNumber evidence="1">3.6.4.-</ecNumber>
    </recommendedName>
    <alternativeName>
        <fullName evidence="1">ATP-dependent helicase HepA</fullName>
    </alternativeName>
</protein>
<reference key="1">
    <citation type="submission" date="2007-02" db="EMBL/GenBank/DDBJ databases">
        <title>Complete sequence of chromosome of Shewanella baltica OS155.</title>
        <authorList>
            <consortium name="US DOE Joint Genome Institute"/>
            <person name="Copeland A."/>
            <person name="Lucas S."/>
            <person name="Lapidus A."/>
            <person name="Barry K."/>
            <person name="Detter J.C."/>
            <person name="Glavina del Rio T."/>
            <person name="Hammon N."/>
            <person name="Israni S."/>
            <person name="Dalin E."/>
            <person name="Tice H."/>
            <person name="Pitluck S."/>
            <person name="Sims D.R."/>
            <person name="Brettin T."/>
            <person name="Bruce D."/>
            <person name="Han C."/>
            <person name="Tapia R."/>
            <person name="Brainard J."/>
            <person name="Schmutz J."/>
            <person name="Larimer F."/>
            <person name="Land M."/>
            <person name="Hauser L."/>
            <person name="Kyrpides N."/>
            <person name="Mikhailova N."/>
            <person name="Brettar I."/>
            <person name="Klappenbach J."/>
            <person name="Konstantinidis K."/>
            <person name="Rodrigues J."/>
            <person name="Tiedje J."/>
            <person name="Richardson P."/>
        </authorList>
    </citation>
    <scope>NUCLEOTIDE SEQUENCE [LARGE SCALE GENOMIC DNA]</scope>
    <source>
        <strain>OS155 / ATCC BAA-1091</strain>
    </source>
</reference>
<name>RAPA_SHEB5</name>
<organism>
    <name type="scientific">Shewanella baltica (strain OS155 / ATCC BAA-1091)</name>
    <dbReference type="NCBI Taxonomy" id="325240"/>
    <lineage>
        <taxon>Bacteria</taxon>
        <taxon>Pseudomonadati</taxon>
        <taxon>Pseudomonadota</taxon>
        <taxon>Gammaproteobacteria</taxon>
        <taxon>Alteromonadales</taxon>
        <taxon>Shewanellaceae</taxon>
        <taxon>Shewanella</taxon>
    </lineage>
</organism>
<sequence length="968" mass="109031">MPFALGQRWISDTESELGLGTVVQVEGRMVTVLFPATGENRMFSRAEAPLTRVIYNPGDSVESHEGWSLAVSELTEKDGIVIYHGIHSETGEQVTLRETLLNHNIRFNKPQDRLFAGQIDRLDRFGVRYQCQMLRHKLASSDLLGLQGPRVGLIPHQMWIAHEVGRRYAPRVLLADEVGLGKTIEAGLIIHQQLLTGRAERILIIVPDTLRHQWLVEMLRRFNLRFSVFDEDRCVEAYADHDNPFYTEQLVICSLELLRKKKRLDQALDADWDLLVVDEAHHLEWTEEAPSRAYQVVEALSEVIPGVLLLTATPDQLGHESHFARLRLLDPDRFYDYDAFLAEEDSYKDVAIAAEALAGNTKLPDAAINSLTELLGEKDISPSIRLIQADGIDAEVQQAARSELLQELLDRHGTGRVLYRNSRASVKGFPKRFFNAYPHAMPDQYQTAARVSGMMGGHKSLEAKAAQALSPEKLYQEFEDNSASWWKFDPRVDWLIEFLKSHRSKKVLIIASQAETALSLEEALRTREGIQATVFHEGMSIIERDKAGAYFAQEEGGAQALICSEIGSEGRNFQFASHLVLFDLPLNPDLLEQRIGRLDRIGQKNDIQIHLPYLEDTAQERLMQWYHQGLNAFELTCPSGHVLYSEFAEDLLNVLAVDDSDELTNLLNHTQSRYKELKHAMEQGRDKLLEINSHGGEKAMAIVQRLAQNDGDTHLIGSVIRLWDIIGVDQEDKGENSIILRPSEHMMFPTYPGLPEDGVTVTFDRDTALSRDDIALITQEHPLVQTGLDLITGSETGTTSVAILKNKALPAGTLFLELIYMADASAPKSSQLYRYLPPTPIRVLLDKNGNDLSAKVDYASFDKQLSAVNRHIGGKLVTASQPILHPLFAKGEEYAQVVVDEMVAQAREKMTQQLSAERSRLESLKAVNPNIREEELEYLRNQMQELNTYLDASQLQLDAIRMVLVSHV</sequence>
<keyword id="KW-0010">Activator</keyword>
<keyword id="KW-0067">ATP-binding</keyword>
<keyword id="KW-0238">DNA-binding</keyword>
<keyword id="KW-0347">Helicase</keyword>
<keyword id="KW-0378">Hydrolase</keyword>
<keyword id="KW-0547">Nucleotide-binding</keyword>
<keyword id="KW-1185">Reference proteome</keyword>
<keyword id="KW-0804">Transcription</keyword>
<keyword id="KW-0805">Transcription regulation</keyword>
<dbReference type="EC" id="3.6.4.-" evidence="1"/>
<dbReference type="EMBL" id="CP000563">
    <property type="protein sequence ID" value="ABN60064.1"/>
    <property type="molecule type" value="Genomic_DNA"/>
</dbReference>
<dbReference type="RefSeq" id="WP_011845709.1">
    <property type="nucleotide sequence ID" value="NC_009052.1"/>
</dbReference>
<dbReference type="SMR" id="A3D001"/>
<dbReference type="STRING" id="325240.Sbal_0535"/>
<dbReference type="KEGG" id="sbl:Sbal_0535"/>
<dbReference type="HOGENOM" id="CLU_011520_0_0_6"/>
<dbReference type="OrthoDB" id="9814088at2"/>
<dbReference type="Proteomes" id="UP000001557">
    <property type="component" value="Chromosome"/>
</dbReference>
<dbReference type="GO" id="GO:0005524">
    <property type="term" value="F:ATP binding"/>
    <property type="evidence" value="ECO:0007669"/>
    <property type="project" value="UniProtKB-UniRule"/>
</dbReference>
<dbReference type="GO" id="GO:0003677">
    <property type="term" value="F:DNA binding"/>
    <property type="evidence" value="ECO:0007669"/>
    <property type="project" value="UniProtKB-KW"/>
</dbReference>
<dbReference type="GO" id="GO:0004386">
    <property type="term" value="F:helicase activity"/>
    <property type="evidence" value="ECO:0007669"/>
    <property type="project" value="UniProtKB-UniRule"/>
</dbReference>
<dbReference type="GO" id="GO:0016817">
    <property type="term" value="F:hydrolase activity, acting on acid anhydrides"/>
    <property type="evidence" value="ECO:0007669"/>
    <property type="project" value="InterPro"/>
</dbReference>
<dbReference type="GO" id="GO:0006355">
    <property type="term" value="P:regulation of DNA-templated transcription"/>
    <property type="evidence" value="ECO:0007669"/>
    <property type="project" value="UniProtKB-UniRule"/>
</dbReference>
<dbReference type="CDD" id="cd18011">
    <property type="entry name" value="DEXDc_RapA"/>
    <property type="match status" value="1"/>
</dbReference>
<dbReference type="CDD" id="cd18793">
    <property type="entry name" value="SF2_C_SNF"/>
    <property type="match status" value="1"/>
</dbReference>
<dbReference type="Gene3D" id="2.30.30.140">
    <property type="match status" value="1"/>
</dbReference>
<dbReference type="Gene3D" id="2.30.30.930">
    <property type="match status" value="1"/>
</dbReference>
<dbReference type="Gene3D" id="3.30.360.80">
    <property type="match status" value="1"/>
</dbReference>
<dbReference type="Gene3D" id="6.10.140.1500">
    <property type="match status" value="1"/>
</dbReference>
<dbReference type="Gene3D" id="6.10.140.2230">
    <property type="match status" value="1"/>
</dbReference>
<dbReference type="Gene3D" id="3.40.50.300">
    <property type="entry name" value="P-loop containing nucleotide triphosphate hydrolases"/>
    <property type="match status" value="1"/>
</dbReference>
<dbReference type="Gene3D" id="3.40.50.10810">
    <property type="entry name" value="Tandem AAA-ATPase domain"/>
    <property type="match status" value="1"/>
</dbReference>
<dbReference type="HAMAP" id="MF_01821">
    <property type="entry name" value="Helicase_RapA"/>
    <property type="match status" value="1"/>
</dbReference>
<dbReference type="InterPro" id="IPR014001">
    <property type="entry name" value="Helicase_ATP-bd"/>
</dbReference>
<dbReference type="InterPro" id="IPR001650">
    <property type="entry name" value="Helicase_C-like"/>
</dbReference>
<dbReference type="InterPro" id="IPR023949">
    <property type="entry name" value="Helicase_RapA"/>
</dbReference>
<dbReference type="InterPro" id="IPR027417">
    <property type="entry name" value="P-loop_NTPase"/>
</dbReference>
<dbReference type="InterPro" id="IPR022737">
    <property type="entry name" value="RapA_C"/>
</dbReference>
<dbReference type="InterPro" id="IPR038718">
    <property type="entry name" value="SNF2-like_sf"/>
</dbReference>
<dbReference type="InterPro" id="IPR049730">
    <property type="entry name" value="SNF2/RAD54-like_C"/>
</dbReference>
<dbReference type="InterPro" id="IPR000330">
    <property type="entry name" value="SNF2_N"/>
</dbReference>
<dbReference type="InterPro" id="IPR040765">
    <property type="entry name" value="Tudor_1_RapA"/>
</dbReference>
<dbReference type="InterPro" id="IPR040766">
    <property type="entry name" value="Tudor_2_RapA"/>
</dbReference>
<dbReference type="NCBIfam" id="NF003426">
    <property type="entry name" value="PRK04914.1"/>
    <property type="match status" value="1"/>
</dbReference>
<dbReference type="PANTHER" id="PTHR45766">
    <property type="entry name" value="DNA ANNEALING HELICASE AND ENDONUCLEASE ZRANB3 FAMILY MEMBER"/>
    <property type="match status" value="1"/>
</dbReference>
<dbReference type="PANTHER" id="PTHR45766:SF6">
    <property type="entry name" value="SWI_SNF-RELATED MATRIX-ASSOCIATED ACTIN-DEPENDENT REGULATOR OF CHROMATIN SUBFAMILY A-LIKE PROTEIN 1"/>
    <property type="match status" value="1"/>
</dbReference>
<dbReference type="Pfam" id="PF00271">
    <property type="entry name" value="Helicase_C"/>
    <property type="match status" value="1"/>
</dbReference>
<dbReference type="Pfam" id="PF12137">
    <property type="entry name" value="RapA_C"/>
    <property type="match status" value="1"/>
</dbReference>
<dbReference type="Pfam" id="PF00176">
    <property type="entry name" value="SNF2-rel_dom"/>
    <property type="match status" value="1"/>
</dbReference>
<dbReference type="Pfam" id="PF18339">
    <property type="entry name" value="Tudor_1_RapA"/>
    <property type="match status" value="1"/>
</dbReference>
<dbReference type="Pfam" id="PF18337">
    <property type="entry name" value="Tudor_RapA"/>
    <property type="match status" value="1"/>
</dbReference>
<dbReference type="SMART" id="SM00487">
    <property type="entry name" value="DEXDc"/>
    <property type="match status" value="1"/>
</dbReference>
<dbReference type="SMART" id="SM00490">
    <property type="entry name" value="HELICc"/>
    <property type="match status" value="1"/>
</dbReference>
<dbReference type="SUPFAM" id="SSF52540">
    <property type="entry name" value="P-loop containing nucleoside triphosphate hydrolases"/>
    <property type="match status" value="2"/>
</dbReference>
<dbReference type="PROSITE" id="PS51192">
    <property type="entry name" value="HELICASE_ATP_BIND_1"/>
    <property type="match status" value="1"/>
</dbReference>
<dbReference type="PROSITE" id="PS51194">
    <property type="entry name" value="HELICASE_CTER"/>
    <property type="match status" value="1"/>
</dbReference>
<feature type="chain" id="PRO_1000088378" description="RNA polymerase-associated protein RapA">
    <location>
        <begin position="1"/>
        <end position="968"/>
    </location>
</feature>
<feature type="domain" description="Helicase ATP-binding" evidence="1">
    <location>
        <begin position="163"/>
        <end position="332"/>
    </location>
</feature>
<feature type="domain" description="Helicase C-terminal" evidence="1">
    <location>
        <begin position="491"/>
        <end position="655"/>
    </location>
</feature>
<feature type="short sequence motif" description="DEAH box">
    <location>
        <begin position="278"/>
        <end position="281"/>
    </location>
</feature>
<feature type="binding site" evidence="1">
    <location>
        <begin position="176"/>
        <end position="183"/>
    </location>
    <ligand>
        <name>ATP</name>
        <dbReference type="ChEBI" id="CHEBI:30616"/>
    </ligand>
</feature>
<evidence type="ECO:0000255" key="1">
    <source>
        <dbReference type="HAMAP-Rule" id="MF_01821"/>
    </source>
</evidence>
<comment type="function">
    <text evidence="1">Transcription regulator that activates transcription by stimulating RNA polymerase (RNAP) recycling in case of stress conditions such as supercoiled DNA or high salt concentrations. Probably acts by releasing the RNAP, when it is trapped or immobilized on tightly supercoiled DNA. Does not activate transcription on linear DNA. Probably not involved in DNA repair.</text>
</comment>
<comment type="subunit">
    <text evidence="1">Interacts with the RNAP. Has a higher affinity for the core RNAP than for the holoenzyme. Its ATPase activity is stimulated by binding to RNAP.</text>
</comment>
<comment type="similarity">
    <text evidence="1">Belongs to the SNF2/RAD54 helicase family. RapA subfamily.</text>
</comment>